<proteinExistence type="inferred from homology"/>
<organism>
    <name type="scientific">Chlamydomonas reinhardtii</name>
    <name type="common">Chlamydomonas smithii</name>
    <dbReference type="NCBI Taxonomy" id="3055"/>
    <lineage>
        <taxon>Eukaryota</taxon>
        <taxon>Viridiplantae</taxon>
        <taxon>Chlorophyta</taxon>
        <taxon>core chlorophytes</taxon>
        <taxon>Chlorophyceae</taxon>
        <taxon>CS clade</taxon>
        <taxon>Chlamydomonadales</taxon>
        <taxon>Chlamydomonadaceae</taxon>
        <taxon>Chlamydomonas</taxon>
    </lineage>
</organism>
<sequence>MAALESFLYTSESVNEGHPDKICDQVSDAVLDACLEQDPDSKVACETCCKTGMVMVFGEITTKAKVDYEAIVRKVCKEIGFTSEDVGLDADKCKVLVHIEEQSPDIGQGVHGMGTKALEEIGAGDQGHMFGYATDETPELMPLTHVLATQLGYKLTEVRKNGVCPWLRPDGKTQVTVEYKREGGAMIPQRVHTILISTQHNPDVTNEKIREDLMEHVIKPVVPAKYLDDKTIFHLNPSGRFVIGGPHGDAGLTGRKIIIDTYGGWGAHGGGAFSGKDPTKVDRSGAYIARQAAKSVVASGLAKRCLVQVSYSIAVAEPLSVFVDTYGTGTMPDAEILKLIRKHFDFRPGLIGKNLDLKRGGNKRYQKTAAYGHFGRDDPDFTWETVKKLE</sequence>
<accession>A8HYU5</accession>
<evidence type="ECO:0000250" key="1"/>
<evidence type="ECO:0000250" key="2">
    <source>
        <dbReference type="UniProtKB" id="P0A817"/>
    </source>
</evidence>
<evidence type="ECO:0000250" key="3">
    <source>
        <dbReference type="UniProtKB" id="P13444"/>
    </source>
</evidence>
<evidence type="ECO:0000250" key="4">
    <source>
        <dbReference type="UniProtKB" id="Q00266"/>
    </source>
</evidence>
<evidence type="ECO:0000250" key="5">
    <source>
        <dbReference type="UniProtKB" id="Q96551"/>
    </source>
</evidence>
<evidence type="ECO:0000305" key="6"/>
<keyword id="KW-0067">ATP-binding</keyword>
<keyword id="KW-0170">Cobalt</keyword>
<keyword id="KW-0963">Cytoplasm</keyword>
<keyword id="KW-0460">Magnesium</keyword>
<keyword id="KW-0479">Metal-binding</keyword>
<keyword id="KW-0547">Nucleotide-binding</keyword>
<keyword id="KW-0554">One-carbon metabolism</keyword>
<keyword id="KW-0630">Potassium</keyword>
<keyword id="KW-0808">Transferase</keyword>
<dbReference type="EC" id="2.5.1.6" evidence="5"/>
<dbReference type="EMBL" id="DS496110">
    <property type="protein sequence ID" value="EDP08638.1"/>
    <property type="molecule type" value="Genomic_DNA"/>
</dbReference>
<dbReference type="RefSeq" id="XP_001696661.1">
    <property type="nucleotide sequence ID" value="XM_001696609.1"/>
</dbReference>
<dbReference type="SMR" id="A8HYU5"/>
<dbReference type="PaxDb" id="3055-EDP08638"/>
<dbReference type="ProMEX" id="A8HYU5"/>
<dbReference type="EnsemblPlants" id="PNW81523">
    <property type="protein sequence ID" value="PNW81523"/>
    <property type="gene ID" value="CHLRE_06g250200v5"/>
</dbReference>
<dbReference type="Gramene" id="PNW81523">
    <property type="protein sequence ID" value="PNW81523"/>
    <property type="gene ID" value="CHLRE_06g250200v5"/>
</dbReference>
<dbReference type="eggNOG" id="KOG1506">
    <property type="taxonomic scope" value="Eukaryota"/>
</dbReference>
<dbReference type="HOGENOM" id="CLU_041802_0_1_1"/>
<dbReference type="OMA" id="TVEYRMS"/>
<dbReference type="OrthoDB" id="5852090at2759"/>
<dbReference type="UniPathway" id="UPA00315">
    <property type="reaction ID" value="UER00080"/>
</dbReference>
<dbReference type="GO" id="GO:0005737">
    <property type="term" value="C:cytoplasm"/>
    <property type="evidence" value="ECO:0007669"/>
    <property type="project" value="UniProtKB-SubCell"/>
</dbReference>
<dbReference type="GO" id="GO:0005524">
    <property type="term" value="F:ATP binding"/>
    <property type="evidence" value="ECO:0007669"/>
    <property type="project" value="UniProtKB-KW"/>
</dbReference>
<dbReference type="GO" id="GO:0046872">
    <property type="term" value="F:metal ion binding"/>
    <property type="evidence" value="ECO:0007669"/>
    <property type="project" value="UniProtKB-KW"/>
</dbReference>
<dbReference type="GO" id="GO:0004478">
    <property type="term" value="F:methionine adenosyltransferase activity"/>
    <property type="evidence" value="ECO:0007669"/>
    <property type="project" value="UniProtKB-EC"/>
</dbReference>
<dbReference type="GO" id="GO:0006730">
    <property type="term" value="P:one-carbon metabolic process"/>
    <property type="evidence" value="ECO:0007669"/>
    <property type="project" value="UniProtKB-KW"/>
</dbReference>
<dbReference type="GO" id="GO:0006556">
    <property type="term" value="P:S-adenosylmethionine biosynthetic process"/>
    <property type="evidence" value="ECO:0007669"/>
    <property type="project" value="UniProtKB-UniPathway"/>
</dbReference>
<dbReference type="CDD" id="cd18079">
    <property type="entry name" value="S-AdoMet_synt"/>
    <property type="match status" value="1"/>
</dbReference>
<dbReference type="FunFam" id="3.30.300.10:FF:000001">
    <property type="entry name" value="S-adenosylmethionine synthase"/>
    <property type="match status" value="1"/>
</dbReference>
<dbReference type="FunFam" id="3.30.300.10:FF:000003">
    <property type="entry name" value="S-adenosylmethionine synthase"/>
    <property type="match status" value="1"/>
</dbReference>
<dbReference type="FunFam" id="3.30.300.10:FF:000004">
    <property type="entry name" value="S-adenosylmethionine synthase"/>
    <property type="match status" value="1"/>
</dbReference>
<dbReference type="Gene3D" id="3.30.300.10">
    <property type="match status" value="3"/>
</dbReference>
<dbReference type="HAMAP" id="MF_00086">
    <property type="entry name" value="S_AdoMet_synth1"/>
    <property type="match status" value="1"/>
</dbReference>
<dbReference type="InterPro" id="IPR022631">
    <property type="entry name" value="ADOMET_SYNTHASE_CS"/>
</dbReference>
<dbReference type="InterPro" id="IPR022630">
    <property type="entry name" value="S-AdoMet_synt_C"/>
</dbReference>
<dbReference type="InterPro" id="IPR022629">
    <property type="entry name" value="S-AdoMet_synt_central"/>
</dbReference>
<dbReference type="InterPro" id="IPR022628">
    <property type="entry name" value="S-AdoMet_synt_N"/>
</dbReference>
<dbReference type="InterPro" id="IPR002133">
    <property type="entry name" value="S-AdoMet_synthetase"/>
</dbReference>
<dbReference type="InterPro" id="IPR022636">
    <property type="entry name" value="S-AdoMet_synthetase_sfam"/>
</dbReference>
<dbReference type="NCBIfam" id="TIGR01034">
    <property type="entry name" value="metK"/>
    <property type="match status" value="1"/>
</dbReference>
<dbReference type="PANTHER" id="PTHR11964">
    <property type="entry name" value="S-ADENOSYLMETHIONINE SYNTHETASE"/>
    <property type="match status" value="1"/>
</dbReference>
<dbReference type="Pfam" id="PF02773">
    <property type="entry name" value="S-AdoMet_synt_C"/>
    <property type="match status" value="1"/>
</dbReference>
<dbReference type="Pfam" id="PF02772">
    <property type="entry name" value="S-AdoMet_synt_M"/>
    <property type="match status" value="1"/>
</dbReference>
<dbReference type="Pfam" id="PF00438">
    <property type="entry name" value="S-AdoMet_synt_N"/>
    <property type="match status" value="1"/>
</dbReference>
<dbReference type="PIRSF" id="PIRSF000497">
    <property type="entry name" value="MAT"/>
    <property type="match status" value="1"/>
</dbReference>
<dbReference type="SUPFAM" id="SSF55973">
    <property type="entry name" value="S-adenosylmethionine synthetase"/>
    <property type="match status" value="3"/>
</dbReference>
<dbReference type="PROSITE" id="PS00376">
    <property type="entry name" value="ADOMET_SYNTHASE_1"/>
    <property type="match status" value="1"/>
</dbReference>
<dbReference type="PROSITE" id="PS00377">
    <property type="entry name" value="ADOMET_SYNTHASE_2"/>
    <property type="match status" value="1"/>
</dbReference>
<feature type="chain" id="PRO_0000363018" description="S-adenosylmethionine synthase">
    <location>
        <begin position="1"/>
        <end position="390"/>
    </location>
</feature>
<feature type="binding site" evidence="3">
    <location>
        <position position="12"/>
    </location>
    <ligand>
        <name>Mg(2+)</name>
        <dbReference type="ChEBI" id="CHEBI:18420"/>
    </ligand>
</feature>
<feature type="binding site" description="in other chain" evidence="4">
    <location>
        <position position="18"/>
    </location>
    <ligand>
        <name>ATP</name>
        <dbReference type="ChEBI" id="CHEBI:30616"/>
        <note>ligand shared between two neighboring subunits</note>
    </ligand>
</feature>
<feature type="binding site" evidence="2">
    <location>
        <position position="46"/>
    </location>
    <ligand>
        <name>K(+)</name>
        <dbReference type="ChEBI" id="CHEBI:29103"/>
    </ligand>
</feature>
<feature type="binding site" description="in other chain" evidence="2">
    <location>
        <position position="59"/>
    </location>
    <ligand>
        <name>L-methionine</name>
        <dbReference type="ChEBI" id="CHEBI:57844"/>
        <note>ligand shared between two neighboring subunits</note>
    </ligand>
</feature>
<feature type="binding site" description="in other chain" evidence="2">
    <location>
        <position position="102"/>
    </location>
    <ligand>
        <name>L-methionine</name>
        <dbReference type="ChEBI" id="CHEBI:57844"/>
        <note>ligand shared between two neighboring subunits</note>
    </ligand>
</feature>
<feature type="binding site" description="in other chain" evidence="4">
    <location>
        <begin position="170"/>
        <end position="172"/>
    </location>
    <ligand>
        <name>ATP</name>
        <dbReference type="ChEBI" id="CHEBI:30616"/>
        <note>ligand shared between two neighboring subunits</note>
    </ligand>
</feature>
<feature type="binding site" description="in other chain" evidence="4">
    <location>
        <begin position="238"/>
        <end position="241"/>
    </location>
    <ligand>
        <name>ATP</name>
        <dbReference type="ChEBI" id="CHEBI:30616"/>
        <note>ligand shared between two neighboring subunits</note>
    </ligand>
</feature>
<feature type="binding site" description="in other chain" evidence="4">
    <location>
        <position position="249"/>
    </location>
    <ligand>
        <name>ATP</name>
        <dbReference type="ChEBI" id="CHEBI:30616"/>
        <note>ligand shared between two neighboring subunits</note>
    </ligand>
</feature>
<feature type="binding site" evidence="2">
    <location>
        <position position="249"/>
    </location>
    <ligand>
        <name>L-methionine</name>
        <dbReference type="ChEBI" id="CHEBI:57844"/>
        <note>ligand shared between two neighboring subunits</note>
    </ligand>
</feature>
<feature type="binding site" description="in other chain" evidence="2">
    <location>
        <begin position="255"/>
        <end position="256"/>
    </location>
    <ligand>
        <name>ATP</name>
        <dbReference type="ChEBI" id="CHEBI:30616"/>
        <note>ligand shared between two neighboring subunits</note>
    </ligand>
</feature>
<feature type="binding site" evidence="2">
    <location>
        <position position="272"/>
    </location>
    <ligand>
        <name>ATP</name>
        <dbReference type="ChEBI" id="CHEBI:30616"/>
        <note>ligand shared between two neighboring subunits</note>
    </ligand>
</feature>
<feature type="binding site" evidence="2">
    <location>
        <position position="276"/>
    </location>
    <ligand>
        <name>ATP</name>
        <dbReference type="ChEBI" id="CHEBI:30616"/>
        <note>ligand shared between two neighboring subunits</note>
    </ligand>
</feature>
<feature type="binding site" evidence="3">
    <location>
        <position position="280"/>
    </location>
    <ligand>
        <name>ATP</name>
        <dbReference type="ChEBI" id="CHEBI:30616"/>
        <note>ligand shared between two neighboring subunits</note>
    </ligand>
</feature>
<feature type="binding site" description="in other chain" evidence="2">
    <location>
        <position position="280"/>
    </location>
    <ligand>
        <name>L-methionine</name>
        <dbReference type="ChEBI" id="CHEBI:57844"/>
        <note>ligand shared between two neighboring subunits</note>
    </ligand>
</feature>
<comment type="function">
    <text evidence="5">Catalyzes the formation of S-adenosylmethionine from methionine and ATP. The reaction comprises two steps that are both catalyzed by the same enzyme: formation of S-adenosylmethionine (AdoMet) and triphosphate, and subsequent hydrolysis of the triphosphate.</text>
</comment>
<comment type="catalytic activity">
    <reaction evidence="5">
        <text>L-methionine + ATP + H2O = S-adenosyl-L-methionine + phosphate + diphosphate</text>
        <dbReference type="Rhea" id="RHEA:21080"/>
        <dbReference type="ChEBI" id="CHEBI:15377"/>
        <dbReference type="ChEBI" id="CHEBI:30616"/>
        <dbReference type="ChEBI" id="CHEBI:33019"/>
        <dbReference type="ChEBI" id="CHEBI:43474"/>
        <dbReference type="ChEBI" id="CHEBI:57844"/>
        <dbReference type="ChEBI" id="CHEBI:59789"/>
        <dbReference type="EC" id="2.5.1.6"/>
    </reaction>
</comment>
<comment type="cofactor">
    <cofactor evidence="5">
        <name>Mn(2+)</name>
        <dbReference type="ChEBI" id="CHEBI:29035"/>
    </cofactor>
    <cofactor evidence="5">
        <name>Mg(2+)</name>
        <dbReference type="ChEBI" id="CHEBI:18420"/>
    </cofactor>
    <cofactor evidence="5">
        <name>Co(2+)</name>
        <dbReference type="ChEBI" id="CHEBI:48828"/>
    </cofactor>
    <text evidence="3 5">Binds 2 divalent ions per subunit. The metal ions interact primarily with the substrate (By similarity). Can utilize magnesium, manganese or cobalt (in vitro) (By similarity).</text>
</comment>
<comment type="cofactor">
    <cofactor evidence="5">
        <name>K(+)</name>
        <dbReference type="ChEBI" id="CHEBI:29103"/>
    </cofactor>
    <text evidence="3">Binds 1 potassium ion per subunit. The potassium ion interacts primarily with the substrate (By similarity).</text>
</comment>
<comment type="pathway">
    <text evidence="5">Amino-acid biosynthesis; S-adenosyl-L-methionine biosynthesis; S-adenosyl-L-methionine from L-methionine: step 1/1.</text>
</comment>
<comment type="subunit">
    <text evidence="1">Homotetramer.</text>
</comment>
<comment type="subcellular location">
    <subcellularLocation>
        <location evidence="1">Cytoplasm</location>
    </subcellularLocation>
</comment>
<comment type="similarity">
    <text evidence="6">Belongs to the AdoMet synthase family.</text>
</comment>
<name>METK_CHLRE</name>
<gene>
    <name type="primary">METM</name>
    <name type="ORF">CHLREDRAFT_182408</name>
</gene>
<protein>
    <recommendedName>
        <fullName>S-adenosylmethionine synthase</fullName>
        <shortName>AdoMet synthase</shortName>
        <ecNumber evidence="5">2.5.1.6</ecNumber>
    </recommendedName>
    <alternativeName>
        <fullName>Methionine adenosyltransferase</fullName>
        <shortName>MAT</shortName>
    </alternativeName>
</protein>
<reference key="1">
    <citation type="journal article" date="2007" name="Science">
        <title>The Chlamydomonas genome reveals the evolution of key animal and plant functions.</title>
        <authorList>
            <person name="Merchant S.S."/>
            <person name="Prochnik S.E."/>
            <person name="Vallon O."/>
            <person name="Harris E.H."/>
            <person name="Karpowicz S.J."/>
            <person name="Witman G.B."/>
            <person name="Terry A."/>
            <person name="Salamov A."/>
            <person name="Fritz-Laylin L.K."/>
            <person name="Marechal-Drouard L."/>
            <person name="Marshall W.F."/>
            <person name="Qu L.H."/>
            <person name="Nelson D.R."/>
            <person name="Sanderfoot A.A."/>
            <person name="Spalding M.H."/>
            <person name="Kapitonov V.V."/>
            <person name="Ren Q."/>
            <person name="Ferris P."/>
            <person name="Lindquist E."/>
            <person name="Shapiro H."/>
            <person name="Lucas S.M."/>
            <person name="Grimwood J."/>
            <person name="Schmutz J."/>
            <person name="Cardol P."/>
            <person name="Cerutti H."/>
            <person name="Chanfreau G."/>
            <person name="Chen C.L."/>
            <person name="Cognat V."/>
            <person name="Croft M.T."/>
            <person name="Dent R."/>
            <person name="Dutcher S."/>
            <person name="Fernandez E."/>
            <person name="Fukuzawa H."/>
            <person name="Gonzalez-Ballester D."/>
            <person name="Gonzalez-Halphen D."/>
            <person name="Hallmann A."/>
            <person name="Hanikenne M."/>
            <person name="Hippler M."/>
            <person name="Inwood W."/>
            <person name="Jabbari K."/>
            <person name="Kalanon M."/>
            <person name="Kuras R."/>
            <person name="Lefebvre P.A."/>
            <person name="Lemaire S.D."/>
            <person name="Lobanov A.V."/>
            <person name="Lohr M."/>
            <person name="Manuell A."/>
            <person name="Meier I."/>
            <person name="Mets L."/>
            <person name="Mittag M."/>
            <person name="Mittelmeier T."/>
            <person name="Moroney J.V."/>
            <person name="Moseley J."/>
            <person name="Napoli C."/>
            <person name="Nedelcu A.M."/>
            <person name="Niyogi K."/>
            <person name="Novoselov S.V."/>
            <person name="Paulsen I.T."/>
            <person name="Pazour G.J."/>
            <person name="Purton S."/>
            <person name="Ral J.P."/>
            <person name="Riano-Pachon D.M."/>
            <person name="Riekhof W."/>
            <person name="Rymarquis L."/>
            <person name="Schroda M."/>
            <person name="Stern D."/>
            <person name="Umen J."/>
            <person name="Willows R."/>
            <person name="Wilson N."/>
            <person name="Zimmer S.L."/>
            <person name="Allmer J."/>
            <person name="Balk J."/>
            <person name="Bisova K."/>
            <person name="Chen C.J."/>
            <person name="Elias M."/>
            <person name="Gendler K."/>
            <person name="Hauser C."/>
            <person name="Lamb M.R."/>
            <person name="Ledford H."/>
            <person name="Long J.C."/>
            <person name="Minagawa J."/>
            <person name="Page M.D."/>
            <person name="Pan J."/>
            <person name="Pootakham W."/>
            <person name="Roje S."/>
            <person name="Rose A."/>
            <person name="Stahlberg E."/>
            <person name="Terauchi A.M."/>
            <person name="Yang P."/>
            <person name="Ball S."/>
            <person name="Bowler C."/>
            <person name="Dieckmann C.L."/>
            <person name="Gladyshev V.N."/>
            <person name="Green P."/>
            <person name="Jorgensen R."/>
            <person name="Mayfield S."/>
            <person name="Mueller-Roeber B."/>
            <person name="Rajamani S."/>
            <person name="Sayre R.T."/>
            <person name="Brokstein P."/>
            <person name="Dubchak I."/>
            <person name="Goodstein D."/>
            <person name="Hornick L."/>
            <person name="Huang Y.W."/>
            <person name="Jhaveri J."/>
            <person name="Luo Y."/>
            <person name="Martinez D."/>
            <person name="Ngau W.C."/>
            <person name="Otillar B."/>
            <person name="Poliakov A."/>
            <person name="Porter A."/>
            <person name="Szajkowski L."/>
            <person name="Werner G."/>
            <person name="Zhou K."/>
            <person name="Grigoriev I.V."/>
            <person name="Rokhsar D.S."/>
            <person name="Grossman A.R."/>
        </authorList>
    </citation>
    <scope>NUCLEOTIDE SEQUENCE [LARGE SCALE GENOMIC DNA]</scope>
    <source>
        <strain>CC-503</strain>
    </source>
</reference>